<gene>
    <name evidence="1" type="primary">dbe</name>
    <name evidence="1" type="synonym">dribble</name>
    <name type="ORF">GF14827</name>
</gene>
<evidence type="ECO:0000250" key="1">
    <source>
        <dbReference type="UniProtKB" id="Q9VPU8"/>
    </source>
</evidence>
<evidence type="ECO:0000255" key="2"/>
<evidence type="ECO:0000256" key="3">
    <source>
        <dbReference type="SAM" id="MobiDB-lite"/>
    </source>
</evidence>
<evidence type="ECO:0000312" key="4">
    <source>
        <dbReference type="EMBL" id="EDV30864.1"/>
    </source>
</evidence>
<reference evidence="4" key="1">
    <citation type="journal article" date="2007" name="Nature">
        <title>Evolution of genes and genomes on the Drosophila phylogeny.</title>
        <authorList>
            <consortium name="Drosophila 12 genomes consortium"/>
        </authorList>
    </citation>
    <scope>NUCLEOTIDE SEQUENCE [LARGE SCALE GENOMIC DNA]</scope>
    <source>
        <strain evidence="4">Tucson 14024-0371.13</strain>
    </source>
</reference>
<keyword id="KW-0175">Coiled coil</keyword>
<keyword id="KW-0217">Developmental protein</keyword>
<keyword id="KW-0539">Nucleus</keyword>
<keyword id="KW-1185">Reference proteome</keyword>
<keyword id="KW-0687">Ribonucleoprotein</keyword>
<keyword id="KW-0690">Ribosome biogenesis</keyword>
<keyword id="KW-0694">RNA-binding</keyword>
<keyword id="KW-0698">rRNA processing</keyword>
<feature type="chain" id="PRO_0000415651" description="KRR1 small subunit processome component homolog">
    <location>
        <begin position="1"/>
        <end position="343"/>
    </location>
</feature>
<feature type="domain" description="KH" evidence="2">
    <location>
        <begin position="125"/>
        <end position="193"/>
    </location>
</feature>
<feature type="region of interest" description="Disordered" evidence="3">
    <location>
        <begin position="232"/>
        <end position="343"/>
    </location>
</feature>
<feature type="coiled-coil region" evidence="2">
    <location>
        <begin position="270"/>
        <end position="302"/>
    </location>
</feature>
<feature type="compositionally biased region" description="Basic residues" evidence="3">
    <location>
        <begin position="232"/>
        <end position="245"/>
    </location>
</feature>
<feature type="compositionally biased region" description="Basic and acidic residues" evidence="3">
    <location>
        <begin position="271"/>
        <end position="302"/>
    </location>
</feature>
<feature type="compositionally biased region" description="Basic residues" evidence="3">
    <location>
        <begin position="331"/>
        <end position="343"/>
    </location>
</feature>
<dbReference type="EMBL" id="CH902620">
    <property type="protein sequence ID" value="EDV30864.1"/>
    <property type="molecule type" value="Genomic_DNA"/>
</dbReference>
<dbReference type="SMR" id="B3MM49"/>
<dbReference type="FunCoup" id="B3MM49">
    <property type="interactions" value="1726"/>
</dbReference>
<dbReference type="STRING" id="7217.B3MM49"/>
<dbReference type="EnsemblMetazoa" id="FBtr0119527">
    <property type="protein sequence ID" value="FBpp0118019"/>
    <property type="gene ID" value="FBgn0091854"/>
</dbReference>
<dbReference type="EnsemblMetazoa" id="XM_001961607.4">
    <property type="protein sequence ID" value="XP_001961643.1"/>
    <property type="gene ID" value="LOC6497645"/>
</dbReference>
<dbReference type="GeneID" id="6497645"/>
<dbReference type="KEGG" id="dan:6497645"/>
<dbReference type="CTD" id="33269"/>
<dbReference type="eggNOG" id="KOG2874">
    <property type="taxonomic scope" value="Eukaryota"/>
</dbReference>
<dbReference type="HOGENOM" id="CLU_040185_0_2_1"/>
<dbReference type="InParanoid" id="B3MM49"/>
<dbReference type="OMA" id="TPDIDKW"/>
<dbReference type="OrthoDB" id="441223at2759"/>
<dbReference type="PhylomeDB" id="B3MM49"/>
<dbReference type="Proteomes" id="UP000007801">
    <property type="component" value="Unassembled WGS sequence"/>
</dbReference>
<dbReference type="GO" id="GO:0005730">
    <property type="term" value="C:nucleolus"/>
    <property type="evidence" value="ECO:0007669"/>
    <property type="project" value="UniProtKB-SubCell"/>
</dbReference>
<dbReference type="GO" id="GO:0005654">
    <property type="term" value="C:nucleoplasm"/>
    <property type="evidence" value="ECO:0007669"/>
    <property type="project" value="EnsemblMetazoa"/>
</dbReference>
<dbReference type="GO" id="GO:0032040">
    <property type="term" value="C:small-subunit processome"/>
    <property type="evidence" value="ECO:0007669"/>
    <property type="project" value="TreeGrafter"/>
</dbReference>
<dbReference type="GO" id="GO:0003723">
    <property type="term" value="F:RNA binding"/>
    <property type="evidence" value="ECO:0007669"/>
    <property type="project" value="UniProtKB-KW"/>
</dbReference>
<dbReference type="GO" id="GO:0006364">
    <property type="term" value="P:rRNA processing"/>
    <property type="evidence" value="ECO:0007669"/>
    <property type="project" value="UniProtKB-KW"/>
</dbReference>
<dbReference type="CDD" id="cd22393">
    <property type="entry name" value="KH-I_KRR1_rpt1"/>
    <property type="match status" value="1"/>
</dbReference>
<dbReference type="CDD" id="cd22394">
    <property type="entry name" value="KH-I_KRR1_rpt2"/>
    <property type="match status" value="1"/>
</dbReference>
<dbReference type="FunFam" id="3.30.1370.10:FF:000011">
    <property type="entry name" value="KRR1 small subunit processome component"/>
    <property type="match status" value="1"/>
</dbReference>
<dbReference type="FunFam" id="3.30.1370.10:FF:000014">
    <property type="entry name" value="KRR1 small subunit processome component"/>
    <property type="match status" value="1"/>
</dbReference>
<dbReference type="Gene3D" id="3.30.1370.10">
    <property type="entry name" value="K Homology domain, type 1"/>
    <property type="match status" value="2"/>
</dbReference>
<dbReference type="InterPro" id="IPR004087">
    <property type="entry name" value="KH_dom"/>
</dbReference>
<dbReference type="InterPro" id="IPR036612">
    <property type="entry name" value="KH_dom_type_1_sf"/>
</dbReference>
<dbReference type="InterPro" id="IPR041174">
    <property type="entry name" value="KRR1-like_KH1"/>
</dbReference>
<dbReference type="InterPro" id="IPR048550">
    <property type="entry name" value="KRR1-like_KH1_euk"/>
</dbReference>
<dbReference type="InterPro" id="IPR048548">
    <property type="entry name" value="KRR1-like_KH2"/>
</dbReference>
<dbReference type="InterPro" id="IPR048549">
    <property type="entry name" value="KRR1-like_KH2_euk"/>
</dbReference>
<dbReference type="InterPro" id="IPR024166">
    <property type="entry name" value="rRNA_assembly_KRR1"/>
</dbReference>
<dbReference type="PANTHER" id="PTHR12581">
    <property type="entry name" value="HIV-1 REV BINDING PROTEIN 2, 3"/>
    <property type="match status" value="1"/>
</dbReference>
<dbReference type="PANTHER" id="PTHR12581:SF0">
    <property type="entry name" value="KRR1 SMALL SUBUNIT PROCESSOME COMPONENT HOMOLOG"/>
    <property type="match status" value="1"/>
</dbReference>
<dbReference type="Pfam" id="PF17903">
    <property type="entry name" value="KH_KRR1_1st"/>
    <property type="match status" value="1"/>
</dbReference>
<dbReference type="Pfam" id="PF21800">
    <property type="entry name" value="KH_KRR1_2nd"/>
    <property type="match status" value="1"/>
</dbReference>
<dbReference type="PIRSF" id="PIRSF006515">
    <property type="entry name" value="KRR1"/>
    <property type="match status" value="1"/>
</dbReference>
<dbReference type="SMART" id="SM00322">
    <property type="entry name" value="KH"/>
    <property type="match status" value="1"/>
</dbReference>
<dbReference type="SUPFAM" id="SSF54791">
    <property type="entry name" value="Eukaryotic type KH-domain (KH-domain type I)"/>
    <property type="match status" value="1"/>
</dbReference>
<sequence length="343" mass="39345">MSDSETEETKISTEPVENAWAMKIPSFKPEDNPHGMVEESSFATLFPKYRERYLKEVWPLVEQCVAEHHLKAELDLVEGSMVVKTSRKTWDPYIIIKARDMIKLMARSVPFEQAKRVLQDDIGCDIIKIGNLVHKKEKFVKRRQRLIGPNGATLKSIELLTDCYVLVQGNTVAALGPYKGLQQVRDIVVETMNNVHPIYNIKALMIKRELMKDPRLANEDWSRFLPKFKNKNISKRKQPKVKKAKKEYTPFPPAQPESKVGKQLASGEYFLNKEQKQAKRQQERSAKQADAAKRQDERRNKDFVPPTEEASSSRKRSSAENASSKVDVKALKAKLLKANKKKV</sequence>
<organism>
    <name type="scientific">Drosophila ananassae</name>
    <name type="common">Fruit fly</name>
    <dbReference type="NCBI Taxonomy" id="7217"/>
    <lineage>
        <taxon>Eukaryota</taxon>
        <taxon>Metazoa</taxon>
        <taxon>Ecdysozoa</taxon>
        <taxon>Arthropoda</taxon>
        <taxon>Hexapoda</taxon>
        <taxon>Insecta</taxon>
        <taxon>Pterygota</taxon>
        <taxon>Neoptera</taxon>
        <taxon>Endopterygota</taxon>
        <taxon>Diptera</taxon>
        <taxon>Brachycera</taxon>
        <taxon>Muscomorpha</taxon>
        <taxon>Ephydroidea</taxon>
        <taxon>Drosophilidae</taxon>
        <taxon>Drosophila</taxon>
        <taxon>Sophophora</taxon>
    </lineage>
</organism>
<name>KRR1_DROAN</name>
<proteinExistence type="inferred from homology"/>
<protein>
    <recommendedName>
        <fullName evidence="1">KRR1 small subunit processome component homolog</fullName>
    </recommendedName>
    <alternativeName>
        <fullName evidence="1">KRR-R motif-containing protein 1</fullName>
    </alternativeName>
    <alternativeName>
        <fullName evidence="1">Protein dribble</fullName>
    </alternativeName>
</protein>
<accession>B3MM49</accession>
<comment type="function">
    <text evidence="1">Required for 40S ribosome biogenesis. Involved in nucleolar processing of pre-18S ribosomal RNA and ribosome assembly. Binds to RNA. Required for female germline development, cell viability during eye development and for survival of dividing cells and epithelial cells during early wing disk development (By similarity).</text>
</comment>
<comment type="subunit">
    <text evidence="1">Monomer. Component of the ribosomal small subunit (SSU) processome (By similarity).</text>
</comment>
<comment type="subcellular location">
    <subcellularLocation>
        <location evidence="1">Nucleus</location>
        <location evidence="1">Nucleolus</location>
    </subcellularLocation>
</comment>
<comment type="similarity">
    <text evidence="2">Belongs to the KRR1 family.</text>
</comment>